<reference key="1">
    <citation type="journal article" date="2005" name="Proc. Natl. Acad. Sci. U.S.A.">
        <title>Comparison of the complete genome sequences of Pseudomonas syringae pv. syringae B728a and pv. tomato DC3000.</title>
        <authorList>
            <person name="Feil H."/>
            <person name="Feil W.S."/>
            <person name="Chain P."/>
            <person name="Larimer F."/>
            <person name="Dibartolo G."/>
            <person name="Copeland A."/>
            <person name="Lykidis A."/>
            <person name="Trong S."/>
            <person name="Nolan M."/>
            <person name="Goltsman E."/>
            <person name="Thiel J."/>
            <person name="Malfatti S."/>
            <person name="Loper J.E."/>
            <person name="Lapidus A."/>
            <person name="Detter J.C."/>
            <person name="Land M."/>
            <person name="Richardson P.M."/>
            <person name="Kyrpides N.C."/>
            <person name="Ivanova N."/>
            <person name="Lindow S.E."/>
        </authorList>
    </citation>
    <scope>NUCLEOTIDE SEQUENCE [LARGE SCALE GENOMIC DNA]</scope>
    <source>
        <strain>B728a</strain>
    </source>
</reference>
<dbReference type="EC" id="1.1.1.23" evidence="1"/>
<dbReference type="EMBL" id="CP000075">
    <property type="protein sequence ID" value="AAY39163.1"/>
    <property type="molecule type" value="Genomic_DNA"/>
</dbReference>
<dbReference type="RefSeq" id="WP_011268859.1">
    <property type="nucleotide sequence ID" value="NC_007005.1"/>
</dbReference>
<dbReference type="RefSeq" id="YP_237201.1">
    <property type="nucleotide sequence ID" value="NC_007005.1"/>
</dbReference>
<dbReference type="SMR" id="Q4ZNV9"/>
<dbReference type="STRING" id="205918.Psyr_4133"/>
<dbReference type="KEGG" id="psb:Psyr_4133"/>
<dbReference type="PATRIC" id="fig|205918.7.peg.4253"/>
<dbReference type="eggNOG" id="COG0141">
    <property type="taxonomic scope" value="Bacteria"/>
</dbReference>
<dbReference type="HOGENOM" id="CLU_006732_3_3_6"/>
<dbReference type="OrthoDB" id="9805269at2"/>
<dbReference type="UniPathway" id="UPA00031">
    <property type="reaction ID" value="UER00014"/>
</dbReference>
<dbReference type="Proteomes" id="UP000000426">
    <property type="component" value="Chromosome"/>
</dbReference>
<dbReference type="GO" id="GO:0005829">
    <property type="term" value="C:cytosol"/>
    <property type="evidence" value="ECO:0007669"/>
    <property type="project" value="TreeGrafter"/>
</dbReference>
<dbReference type="GO" id="GO:0004399">
    <property type="term" value="F:histidinol dehydrogenase activity"/>
    <property type="evidence" value="ECO:0007669"/>
    <property type="project" value="UniProtKB-UniRule"/>
</dbReference>
<dbReference type="GO" id="GO:0051287">
    <property type="term" value="F:NAD binding"/>
    <property type="evidence" value="ECO:0007669"/>
    <property type="project" value="InterPro"/>
</dbReference>
<dbReference type="GO" id="GO:0008270">
    <property type="term" value="F:zinc ion binding"/>
    <property type="evidence" value="ECO:0007669"/>
    <property type="project" value="UniProtKB-UniRule"/>
</dbReference>
<dbReference type="GO" id="GO:0000105">
    <property type="term" value="P:L-histidine biosynthetic process"/>
    <property type="evidence" value="ECO:0007669"/>
    <property type="project" value="UniProtKB-UniRule"/>
</dbReference>
<dbReference type="CDD" id="cd06572">
    <property type="entry name" value="Histidinol_dh"/>
    <property type="match status" value="1"/>
</dbReference>
<dbReference type="FunFam" id="3.40.50.1980:FF:000004">
    <property type="entry name" value="Histidinol dehydrogenase"/>
    <property type="match status" value="1"/>
</dbReference>
<dbReference type="FunFam" id="3.40.50.1980:FF:000010">
    <property type="entry name" value="Histidinol dehydrogenase"/>
    <property type="match status" value="1"/>
</dbReference>
<dbReference type="Gene3D" id="1.20.5.1300">
    <property type="match status" value="1"/>
</dbReference>
<dbReference type="Gene3D" id="3.40.50.1980">
    <property type="entry name" value="Nitrogenase molybdenum iron protein domain"/>
    <property type="match status" value="2"/>
</dbReference>
<dbReference type="HAMAP" id="MF_01024">
    <property type="entry name" value="HisD"/>
    <property type="match status" value="1"/>
</dbReference>
<dbReference type="InterPro" id="IPR016161">
    <property type="entry name" value="Ald_DH/histidinol_DH"/>
</dbReference>
<dbReference type="InterPro" id="IPR001692">
    <property type="entry name" value="Histidinol_DH_CS"/>
</dbReference>
<dbReference type="InterPro" id="IPR022695">
    <property type="entry name" value="Histidinol_DH_monofunct"/>
</dbReference>
<dbReference type="InterPro" id="IPR012131">
    <property type="entry name" value="Hstdl_DH"/>
</dbReference>
<dbReference type="NCBIfam" id="TIGR00069">
    <property type="entry name" value="hisD"/>
    <property type="match status" value="1"/>
</dbReference>
<dbReference type="PANTHER" id="PTHR21256:SF2">
    <property type="entry name" value="HISTIDINE BIOSYNTHESIS TRIFUNCTIONAL PROTEIN"/>
    <property type="match status" value="1"/>
</dbReference>
<dbReference type="PANTHER" id="PTHR21256">
    <property type="entry name" value="HISTIDINOL DEHYDROGENASE HDH"/>
    <property type="match status" value="1"/>
</dbReference>
<dbReference type="Pfam" id="PF00815">
    <property type="entry name" value="Histidinol_dh"/>
    <property type="match status" value="1"/>
</dbReference>
<dbReference type="PIRSF" id="PIRSF000099">
    <property type="entry name" value="Histidinol_dh"/>
    <property type="match status" value="1"/>
</dbReference>
<dbReference type="PRINTS" id="PR00083">
    <property type="entry name" value="HOLDHDRGNASE"/>
</dbReference>
<dbReference type="SUPFAM" id="SSF53720">
    <property type="entry name" value="ALDH-like"/>
    <property type="match status" value="1"/>
</dbReference>
<dbReference type="PROSITE" id="PS00611">
    <property type="entry name" value="HISOL_DEHYDROGENASE"/>
    <property type="match status" value="1"/>
</dbReference>
<organism>
    <name type="scientific">Pseudomonas syringae pv. syringae (strain B728a)</name>
    <dbReference type="NCBI Taxonomy" id="205918"/>
    <lineage>
        <taxon>Bacteria</taxon>
        <taxon>Pseudomonadati</taxon>
        <taxon>Pseudomonadota</taxon>
        <taxon>Gammaproteobacteria</taxon>
        <taxon>Pseudomonadales</taxon>
        <taxon>Pseudomonadaceae</taxon>
        <taxon>Pseudomonas</taxon>
        <taxon>Pseudomonas syringae</taxon>
    </lineage>
</organism>
<comment type="function">
    <text evidence="1">Catalyzes the sequential NAD-dependent oxidations of L-histidinol to L-histidinaldehyde and then to L-histidine.</text>
</comment>
<comment type="catalytic activity">
    <reaction evidence="1">
        <text>L-histidinol + 2 NAD(+) + H2O = L-histidine + 2 NADH + 3 H(+)</text>
        <dbReference type="Rhea" id="RHEA:20641"/>
        <dbReference type="ChEBI" id="CHEBI:15377"/>
        <dbReference type="ChEBI" id="CHEBI:15378"/>
        <dbReference type="ChEBI" id="CHEBI:57540"/>
        <dbReference type="ChEBI" id="CHEBI:57595"/>
        <dbReference type="ChEBI" id="CHEBI:57699"/>
        <dbReference type="ChEBI" id="CHEBI:57945"/>
        <dbReference type="EC" id="1.1.1.23"/>
    </reaction>
</comment>
<comment type="cofactor">
    <cofactor evidence="1">
        <name>Zn(2+)</name>
        <dbReference type="ChEBI" id="CHEBI:29105"/>
    </cofactor>
    <text evidence="1">Binds 1 zinc ion per subunit.</text>
</comment>
<comment type="pathway">
    <text evidence="1">Amino-acid biosynthesis; L-histidine biosynthesis; L-histidine from 5-phospho-alpha-D-ribose 1-diphosphate: step 9/9.</text>
</comment>
<comment type="similarity">
    <text evidence="1">Belongs to the histidinol dehydrogenase family.</text>
</comment>
<feature type="chain" id="PRO_0000135823" description="Histidinol dehydrogenase">
    <location>
        <begin position="1"/>
        <end position="448"/>
    </location>
</feature>
<feature type="active site" description="Proton acceptor" evidence="1">
    <location>
        <position position="333"/>
    </location>
</feature>
<feature type="active site" description="Proton acceptor" evidence="1">
    <location>
        <position position="334"/>
    </location>
</feature>
<feature type="binding site" evidence="1">
    <location>
        <position position="136"/>
    </location>
    <ligand>
        <name>NAD(+)</name>
        <dbReference type="ChEBI" id="CHEBI:57540"/>
    </ligand>
</feature>
<feature type="binding site" evidence="1">
    <location>
        <position position="197"/>
    </location>
    <ligand>
        <name>NAD(+)</name>
        <dbReference type="ChEBI" id="CHEBI:57540"/>
    </ligand>
</feature>
<feature type="binding site" evidence="1">
    <location>
        <position position="220"/>
    </location>
    <ligand>
        <name>NAD(+)</name>
        <dbReference type="ChEBI" id="CHEBI:57540"/>
    </ligand>
</feature>
<feature type="binding site" evidence="1">
    <location>
        <position position="243"/>
    </location>
    <ligand>
        <name>substrate</name>
    </ligand>
</feature>
<feature type="binding site" evidence="1">
    <location>
        <position position="265"/>
    </location>
    <ligand>
        <name>substrate</name>
    </ligand>
</feature>
<feature type="binding site" evidence="1">
    <location>
        <position position="265"/>
    </location>
    <ligand>
        <name>Zn(2+)</name>
        <dbReference type="ChEBI" id="CHEBI:29105"/>
    </ligand>
</feature>
<feature type="binding site" evidence="1">
    <location>
        <position position="268"/>
    </location>
    <ligand>
        <name>substrate</name>
    </ligand>
</feature>
<feature type="binding site" evidence="1">
    <location>
        <position position="268"/>
    </location>
    <ligand>
        <name>Zn(2+)</name>
        <dbReference type="ChEBI" id="CHEBI:29105"/>
    </ligand>
</feature>
<feature type="binding site" evidence="1">
    <location>
        <position position="334"/>
    </location>
    <ligand>
        <name>substrate</name>
    </ligand>
</feature>
<feature type="binding site" evidence="1">
    <location>
        <position position="367"/>
    </location>
    <ligand>
        <name>substrate</name>
    </ligand>
</feature>
<feature type="binding site" evidence="1">
    <location>
        <position position="367"/>
    </location>
    <ligand>
        <name>Zn(2+)</name>
        <dbReference type="ChEBI" id="CHEBI:29105"/>
    </ligand>
</feature>
<feature type="binding site" evidence="1">
    <location>
        <position position="421"/>
    </location>
    <ligand>
        <name>substrate</name>
    </ligand>
</feature>
<feature type="binding site" evidence="1">
    <location>
        <position position="426"/>
    </location>
    <ligand>
        <name>substrate</name>
    </ligand>
</feature>
<feature type="binding site" evidence="1">
    <location>
        <position position="426"/>
    </location>
    <ligand>
        <name>Zn(2+)</name>
        <dbReference type="ChEBI" id="CHEBI:29105"/>
    </ligand>
</feature>
<sequence length="448" mass="48073">MTTPTAIRRLDAADPDFARHLDHLLSWESVSDDSVNQRVLDIIKAVRERGDAALVEFTQKFDGLQVASMADLILPRERLELALTRITPGQREALEKAAERVRSYHEKQKQDSWSYTEADGTVLGQKVTPLDRAGLYVPGGKASYPSSVLMNAIPAKVAGVTEVVMVVPTPRGEINELVLAAACIAGVDRVFTIGGAQAVAALAYGTESVPKVDKVVGPGNIYVATAKRHVFGQVGIDMIAGPSEILVVCDGQTDPDWIAMDLFSQAEHDEDAQAILVSPDAEFLDKVAASITRLLPTMERAAIVETSINGRGALIKVADMAQAIEVANRIAPEHLELSVADPEAWLPQIRHAGAIFMGRHTSEALGDYCAGPNHVLPTSGTARFSSPLGVYDFQKRSSIIYCSPQGASELGKTASVLARGESLSGHARSAEYRITDPDWTAGNKEDGK</sequence>
<accession>Q4ZNV9</accession>
<gene>
    <name evidence="1" type="primary">hisD</name>
    <name type="ordered locus">Psyr_4133</name>
</gene>
<evidence type="ECO:0000255" key="1">
    <source>
        <dbReference type="HAMAP-Rule" id="MF_01024"/>
    </source>
</evidence>
<proteinExistence type="inferred from homology"/>
<keyword id="KW-0028">Amino-acid biosynthesis</keyword>
<keyword id="KW-0368">Histidine biosynthesis</keyword>
<keyword id="KW-0479">Metal-binding</keyword>
<keyword id="KW-0520">NAD</keyword>
<keyword id="KW-0560">Oxidoreductase</keyword>
<keyword id="KW-0862">Zinc</keyword>
<name>HISX_PSEU2</name>
<protein>
    <recommendedName>
        <fullName evidence="1">Histidinol dehydrogenase</fullName>
        <shortName evidence="1">HDH</shortName>
        <ecNumber evidence="1">1.1.1.23</ecNumber>
    </recommendedName>
</protein>